<gene>
    <name evidence="1" type="primary">syd</name>
    <name type="ordered locus">Shewana3_2834</name>
</gene>
<keyword id="KW-0997">Cell inner membrane</keyword>
<keyword id="KW-1003">Cell membrane</keyword>
<keyword id="KW-0472">Membrane</keyword>
<protein>
    <recommendedName>
        <fullName evidence="1">Protein Syd</fullName>
    </recommendedName>
</protein>
<reference key="1">
    <citation type="submission" date="2006-09" db="EMBL/GenBank/DDBJ databases">
        <title>Complete sequence of chromosome 1 of Shewanella sp. ANA-3.</title>
        <authorList>
            <person name="Copeland A."/>
            <person name="Lucas S."/>
            <person name="Lapidus A."/>
            <person name="Barry K."/>
            <person name="Detter J.C."/>
            <person name="Glavina del Rio T."/>
            <person name="Hammon N."/>
            <person name="Israni S."/>
            <person name="Dalin E."/>
            <person name="Tice H."/>
            <person name="Pitluck S."/>
            <person name="Chertkov O."/>
            <person name="Brettin T."/>
            <person name="Bruce D."/>
            <person name="Han C."/>
            <person name="Tapia R."/>
            <person name="Gilna P."/>
            <person name="Schmutz J."/>
            <person name="Larimer F."/>
            <person name="Land M."/>
            <person name="Hauser L."/>
            <person name="Kyrpides N."/>
            <person name="Kim E."/>
            <person name="Newman D."/>
            <person name="Salticov C."/>
            <person name="Konstantinidis K."/>
            <person name="Klappenback J."/>
            <person name="Tiedje J."/>
            <person name="Richardson P."/>
        </authorList>
    </citation>
    <scope>NUCLEOTIDE SEQUENCE [LARGE SCALE GENOMIC DNA]</scope>
    <source>
        <strain>ANA-3</strain>
    </source>
</reference>
<sequence length="216" mass="24325">MSCLPALDKFLDNYHRSYLSTLGELPRYYPQGEPSLCIQGEFDEASDEAVSWLPVKREHLGSFANVEHALELTLWPDINHFYGEYFAAPVLFDSPWGTGELLQVWNEADFDALQQNIIGHLMMKQKLKQPATWFIGLLDEGDKMLTVDNADGSVWGEIPGELPSAQLAPSLAEFIEALSPRIAPPVKHEELPMPALEHPGIVASFKRMWHNLIGKR</sequence>
<comment type="function">
    <text evidence="1">Interacts with the SecY protein in vivo. May bind preferentially to an uncomplexed state of SecY, thus functioning either as a chelating agent for excess SecY in the cell or as a regulatory factor that negatively controls the translocase function.</text>
</comment>
<comment type="subcellular location">
    <subcellularLocation>
        <location evidence="1">Cell inner membrane</location>
        <topology evidence="1">Peripheral membrane protein</topology>
        <orientation evidence="1">Cytoplasmic side</orientation>
    </subcellularLocation>
    <text evidence="1">Loosely associated with the cytoplasmic side of the inner membrane, probably via SecY.</text>
</comment>
<comment type="similarity">
    <text evidence="1">Belongs to the Syd family.</text>
</comment>
<comment type="sequence caution" evidence="2">
    <conflict type="erroneous initiation">
        <sequence resource="EMBL-CDS" id="ABK49061"/>
    </conflict>
</comment>
<proteinExistence type="inferred from homology"/>
<name>SYDP_SHESA</name>
<organism>
    <name type="scientific">Shewanella sp. (strain ANA-3)</name>
    <dbReference type="NCBI Taxonomy" id="94122"/>
    <lineage>
        <taxon>Bacteria</taxon>
        <taxon>Pseudomonadati</taxon>
        <taxon>Pseudomonadota</taxon>
        <taxon>Gammaproteobacteria</taxon>
        <taxon>Alteromonadales</taxon>
        <taxon>Shewanellaceae</taxon>
        <taxon>Shewanella</taxon>
    </lineage>
</organism>
<dbReference type="EMBL" id="CP000469">
    <property type="protein sequence ID" value="ABK49061.1"/>
    <property type="status" value="ALT_INIT"/>
    <property type="molecule type" value="Genomic_DNA"/>
</dbReference>
<dbReference type="RefSeq" id="WP_041412693.1">
    <property type="nucleotide sequence ID" value="NC_008577.1"/>
</dbReference>
<dbReference type="SMR" id="A0KZ42"/>
<dbReference type="STRING" id="94122.Shewana3_2834"/>
<dbReference type="KEGG" id="shn:Shewana3_2834"/>
<dbReference type="eggNOG" id="ENOG502ZCMR">
    <property type="taxonomic scope" value="Bacteria"/>
</dbReference>
<dbReference type="HOGENOM" id="CLU_121866_0_0_6"/>
<dbReference type="OrthoDB" id="5599437at2"/>
<dbReference type="Proteomes" id="UP000002589">
    <property type="component" value="Chromosome"/>
</dbReference>
<dbReference type="GO" id="GO:0009898">
    <property type="term" value="C:cytoplasmic side of plasma membrane"/>
    <property type="evidence" value="ECO:0007669"/>
    <property type="project" value="InterPro"/>
</dbReference>
<dbReference type="CDD" id="cd16323">
    <property type="entry name" value="Syd"/>
    <property type="match status" value="1"/>
</dbReference>
<dbReference type="Gene3D" id="3.40.1580.20">
    <property type="entry name" value="Syd protein"/>
    <property type="match status" value="1"/>
</dbReference>
<dbReference type="HAMAP" id="MF_01104">
    <property type="entry name" value="Syd"/>
    <property type="match status" value="1"/>
</dbReference>
<dbReference type="InterPro" id="IPR009948">
    <property type="entry name" value="Syd"/>
</dbReference>
<dbReference type="InterPro" id="IPR038228">
    <property type="entry name" value="Syd_sf"/>
</dbReference>
<dbReference type="NCBIfam" id="NF003439">
    <property type="entry name" value="PRK04968.1"/>
    <property type="match status" value="1"/>
</dbReference>
<dbReference type="Pfam" id="PF07348">
    <property type="entry name" value="Syd"/>
    <property type="match status" value="1"/>
</dbReference>
<accession>A0KZ42</accession>
<feature type="chain" id="PRO_0000298261" description="Protein Syd">
    <location>
        <begin position="1"/>
        <end position="216"/>
    </location>
</feature>
<evidence type="ECO:0000255" key="1">
    <source>
        <dbReference type="HAMAP-Rule" id="MF_01104"/>
    </source>
</evidence>
<evidence type="ECO:0000305" key="2"/>